<evidence type="ECO:0000255" key="1"/>
<evidence type="ECO:0000255" key="2">
    <source>
        <dbReference type="PROSITE-ProRule" id="PRU10037"/>
    </source>
</evidence>
<evidence type="ECO:0000269" key="3">
    <source>
    </source>
</evidence>
<evidence type="ECO:0000303" key="4">
    <source>
    </source>
</evidence>
<evidence type="ECO:0000303" key="5">
    <source>
    </source>
</evidence>
<evidence type="ECO:0000305" key="6"/>
<evidence type="ECO:0000305" key="7">
    <source>
    </source>
</evidence>
<accession>P26495</accession>
<comment type="function">
    <text evidence="3">Complements a mutant that does not degrade PHA; might be a lipase.</text>
</comment>
<comment type="miscellaneous">
    <text evidence="7">Pseudomonas oleovorans accumulates poly(3-hydroxyalkanoates) after growth on medium chain length hydrocarbons. Large amounts of this polyester are synthesized when cells are grown under nitrogen-limiting conditions. When nitrogen is resupplied in the medium, the accumulated PHA is degraded.</text>
</comment>
<comment type="similarity">
    <text evidence="6">Belongs to the AB hydrolase superfamily. Lipase family.</text>
</comment>
<reference key="1">
    <citation type="journal article" date="1991" name="J. Biol. Chem.">
        <title>Metabolism of poly(3-hydroxyalkanoates) (PHAs) by Pseudomonas oleovorans. Identification and sequences of genes and function of the encoded proteins in the synthesis and degradation of PHA.</title>
        <authorList>
            <person name="Huisman G.W."/>
            <person name="Wonink E."/>
            <person name="Meima R."/>
            <person name="Kazemier B."/>
            <person name="Terpstra P."/>
            <person name="Witholt B."/>
        </authorList>
    </citation>
    <scope>NUCLEOTIDE SEQUENCE [GENOMIC DNA]</scope>
    <scope>FUNCTION</scope>
    <source>
        <strain>GPo1</strain>
    </source>
</reference>
<reference key="2">
    <citation type="journal article" date="1992" name="FEMS Microbiol. Rev.">
        <title>Molecular basis for biosynthesis and accumulation of polyhydroxyalkanoic acids in bacteria.</title>
        <authorList>
            <person name="Steinbuechel A."/>
            <person name="Hustede E."/>
            <person name="Liebergesell M."/>
            <person name="Pieper U."/>
            <person name="Timm A."/>
            <person name="Valentin H."/>
        </authorList>
    </citation>
    <scope>GENE NAME</scope>
</reference>
<name>PHAZ_ECTOL</name>
<gene>
    <name evidence="4" type="primary">phaZ</name>
</gene>
<feature type="chain" id="PRO_0000090351" description="Poly(3-hydroxyalkanoate) depolymerase">
    <location>
        <begin position="1"/>
        <end position="283"/>
    </location>
</feature>
<feature type="domain" description="AB hydrolase-1" evidence="1">
    <location>
        <begin position="30"/>
        <end position="253"/>
    </location>
</feature>
<feature type="active site" description="Charge relay system" evidence="2">
    <location>
        <position position="102"/>
    </location>
</feature>
<dbReference type="EC" id="3.1.1.-"/>
<dbReference type="EMBL" id="M58445">
    <property type="protein sequence ID" value="AAA25933.1"/>
    <property type="molecule type" value="Genomic_DNA"/>
</dbReference>
<dbReference type="PIR" id="B38604">
    <property type="entry name" value="B38604"/>
</dbReference>
<dbReference type="SMR" id="P26495"/>
<dbReference type="STRING" id="301.SAMN05216280_1001145"/>
<dbReference type="ESTHER" id="pseol-phab">
    <property type="family name" value="PHA_depolymerase_arom"/>
</dbReference>
<dbReference type="GO" id="GO:0016020">
    <property type="term" value="C:membrane"/>
    <property type="evidence" value="ECO:0007669"/>
    <property type="project" value="TreeGrafter"/>
</dbReference>
<dbReference type="GO" id="GO:0047372">
    <property type="term" value="F:monoacylglycerol lipase activity"/>
    <property type="evidence" value="ECO:0007669"/>
    <property type="project" value="TreeGrafter"/>
</dbReference>
<dbReference type="GO" id="GO:0046464">
    <property type="term" value="P:acylglycerol catabolic process"/>
    <property type="evidence" value="ECO:0007669"/>
    <property type="project" value="TreeGrafter"/>
</dbReference>
<dbReference type="Gene3D" id="3.40.50.1820">
    <property type="entry name" value="alpha/beta hydrolase"/>
    <property type="match status" value="1"/>
</dbReference>
<dbReference type="InterPro" id="IPR000073">
    <property type="entry name" value="AB_hydrolase_1"/>
</dbReference>
<dbReference type="InterPro" id="IPR029058">
    <property type="entry name" value="AB_hydrolase_fold"/>
</dbReference>
<dbReference type="InterPro" id="IPR050266">
    <property type="entry name" value="AB_hydrolase_sf"/>
</dbReference>
<dbReference type="InterPro" id="IPR011942">
    <property type="entry name" value="PHA_depoly_arom"/>
</dbReference>
<dbReference type="NCBIfam" id="TIGR02240">
    <property type="entry name" value="PHA_depoly_arom"/>
    <property type="match status" value="1"/>
</dbReference>
<dbReference type="PANTHER" id="PTHR43798">
    <property type="entry name" value="MONOACYLGLYCEROL LIPASE"/>
    <property type="match status" value="1"/>
</dbReference>
<dbReference type="PANTHER" id="PTHR43798:SF5">
    <property type="entry name" value="MONOACYLGLYCEROL LIPASE ABHD6"/>
    <property type="match status" value="1"/>
</dbReference>
<dbReference type="Pfam" id="PF00561">
    <property type="entry name" value="Abhydrolase_1"/>
    <property type="match status" value="1"/>
</dbReference>
<dbReference type="PRINTS" id="PR00111">
    <property type="entry name" value="ABHYDROLASE"/>
</dbReference>
<dbReference type="SUPFAM" id="SSF53474">
    <property type="entry name" value="alpha/beta-Hydrolases"/>
    <property type="match status" value="1"/>
</dbReference>
<dbReference type="PROSITE" id="PS00120">
    <property type="entry name" value="LIPASE_SER"/>
    <property type="match status" value="1"/>
</dbReference>
<organism>
    <name type="scientific">Ectopseudomonas oleovorans</name>
    <name type="common">Pseudomonas oleovorans</name>
    <dbReference type="NCBI Taxonomy" id="301"/>
    <lineage>
        <taxon>Bacteria</taxon>
        <taxon>Pseudomonadati</taxon>
        <taxon>Pseudomonadota</taxon>
        <taxon>Gammaproteobacteria</taxon>
        <taxon>Pseudomonadales</taxon>
        <taxon>Pseudomonadaceae</taxon>
        <taxon>Ectopseudomonas</taxon>
    </lineage>
</organism>
<sequence length="283" mass="31463">MPQPYIFRTVELDNQSIRTAVRPGKPHLTPLLIFNGIGANLELVFPFIEALDPDLEVIAFDVPGVGGSSTPRHPYRFPGLAKLTARMLDYLDYGQVNVIGVSWGGALAQQFAHDYPERCKKLVLAATAAGAVMVPGKPKVLWMMASPRRYVQPSHVIRIAPTIYGGGFRRDPELAMQHASKVRSGGKMGYYWQLFAGLGWTSIHWLHKIQQPTLVLAGDDDPLIPLINMRLLAWRIPNAQLHIIDDGHLFLITRAEAVAPIIMKFLQQERQRAVMHPRPASGG</sequence>
<keyword id="KW-0378">Hydrolase</keyword>
<keyword id="KW-0442">Lipid degradation</keyword>
<keyword id="KW-0443">Lipid metabolism</keyword>
<protein>
    <recommendedName>
        <fullName evidence="5">Poly(3-hydroxyalkanoate) depolymerase</fullName>
        <shortName evidence="5">PHA depolymerase</shortName>
        <ecNumber>3.1.1.-</ecNumber>
    </recommendedName>
    <alternativeName>
        <fullName evidence="5">ORF2</fullName>
    </alternativeName>
    <alternativeName>
        <fullName>PHB depolymerase</fullName>
    </alternativeName>
</protein>
<proteinExistence type="inferred from homology"/>